<reference key="1">
    <citation type="journal article" date="2008" name="DNA Res.">
        <title>Comparative genome analysis of Lactobacillus reuteri and Lactobacillus fermentum reveal a genomic island for reuterin and cobalamin production.</title>
        <authorList>
            <person name="Morita H."/>
            <person name="Toh H."/>
            <person name="Fukuda S."/>
            <person name="Horikawa H."/>
            <person name="Oshima K."/>
            <person name="Suzuki T."/>
            <person name="Murakami M."/>
            <person name="Hisamatsu S."/>
            <person name="Kato Y."/>
            <person name="Takizawa T."/>
            <person name="Fukuoka H."/>
            <person name="Yoshimura T."/>
            <person name="Itoh K."/>
            <person name="O'Sullivan D.J."/>
            <person name="McKay L.L."/>
            <person name="Ohno H."/>
            <person name="Kikuchi J."/>
            <person name="Masaoka T."/>
            <person name="Hattori M."/>
        </authorList>
    </citation>
    <scope>NUCLEOTIDE SEQUENCE [LARGE SCALE GENOMIC DNA]</scope>
    <source>
        <strain>JCM 1112</strain>
    </source>
</reference>
<comment type="function">
    <text evidence="1">Binds directly to 23S ribosomal RNA and is necessary for the in vitro assembly process of the 50S ribosomal subunit. It is not involved in the protein synthesizing functions of that subunit.</text>
</comment>
<comment type="similarity">
    <text evidence="1">Belongs to the bacterial ribosomal protein bL20 family.</text>
</comment>
<proteinExistence type="inferred from homology"/>
<name>RL20_LIMRJ</name>
<protein>
    <recommendedName>
        <fullName evidence="1">Large ribosomal subunit protein bL20</fullName>
    </recommendedName>
    <alternativeName>
        <fullName evidence="2">50S ribosomal protein L20</fullName>
    </alternativeName>
</protein>
<evidence type="ECO:0000255" key="1">
    <source>
        <dbReference type="HAMAP-Rule" id="MF_00382"/>
    </source>
</evidence>
<evidence type="ECO:0000305" key="2"/>
<organism>
    <name type="scientific">Limosilactobacillus reuteri subsp. reuteri (strain JCM 1112)</name>
    <name type="common">Lactobacillus reuteri</name>
    <dbReference type="NCBI Taxonomy" id="557433"/>
    <lineage>
        <taxon>Bacteria</taxon>
        <taxon>Bacillati</taxon>
        <taxon>Bacillota</taxon>
        <taxon>Bacilli</taxon>
        <taxon>Lactobacillales</taxon>
        <taxon>Lactobacillaceae</taxon>
        <taxon>Limosilactobacillus</taxon>
    </lineage>
</organism>
<keyword id="KW-0687">Ribonucleoprotein</keyword>
<keyword id="KW-0689">Ribosomal protein</keyword>
<keyword id="KW-0694">RNA-binding</keyword>
<keyword id="KW-0699">rRNA-binding</keyword>
<sequence>MRVKGGTVTRARRKRIMKLAKGYRGSKHRLFKTAKDQVMKSYAYAFRDRKVNKRKFRELWIARINAAARMNDISYSKLMHGLKVANIDINRKMLADLAVNDADAFKALVDEAKKALN</sequence>
<dbReference type="EMBL" id="AP007281">
    <property type="protein sequence ID" value="BAG25689.1"/>
    <property type="molecule type" value="Genomic_DNA"/>
</dbReference>
<dbReference type="RefSeq" id="WP_003668485.1">
    <property type="nucleotide sequence ID" value="NC_010609.1"/>
</dbReference>
<dbReference type="SMR" id="B2G8A7"/>
<dbReference type="DNASU" id="5188364"/>
<dbReference type="KEGG" id="lrf:LAR_1173"/>
<dbReference type="HOGENOM" id="CLU_123265_0_1_9"/>
<dbReference type="GO" id="GO:1990904">
    <property type="term" value="C:ribonucleoprotein complex"/>
    <property type="evidence" value="ECO:0007669"/>
    <property type="project" value="UniProtKB-KW"/>
</dbReference>
<dbReference type="GO" id="GO:0005840">
    <property type="term" value="C:ribosome"/>
    <property type="evidence" value="ECO:0007669"/>
    <property type="project" value="UniProtKB-KW"/>
</dbReference>
<dbReference type="GO" id="GO:0019843">
    <property type="term" value="F:rRNA binding"/>
    <property type="evidence" value="ECO:0007669"/>
    <property type="project" value="UniProtKB-UniRule"/>
</dbReference>
<dbReference type="GO" id="GO:0003735">
    <property type="term" value="F:structural constituent of ribosome"/>
    <property type="evidence" value="ECO:0007669"/>
    <property type="project" value="InterPro"/>
</dbReference>
<dbReference type="GO" id="GO:0000027">
    <property type="term" value="P:ribosomal large subunit assembly"/>
    <property type="evidence" value="ECO:0007669"/>
    <property type="project" value="UniProtKB-UniRule"/>
</dbReference>
<dbReference type="GO" id="GO:0006412">
    <property type="term" value="P:translation"/>
    <property type="evidence" value="ECO:0007669"/>
    <property type="project" value="InterPro"/>
</dbReference>
<dbReference type="CDD" id="cd07026">
    <property type="entry name" value="Ribosomal_L20"/>
    <property type="match status" value="1"/>
</dbReference>
<dbReference type="FunFam" id="1.10.1900.20:FF:000001">
    <property type="entry name" value="50S ribosomal protein L20"/>
    <property type="match status" value="1"/>
</dbReference>
<dbReference type="Gene3D" id="6.10.160.10">
    <property type="match status" value="1"/>
</dbReference>
<dbReference type="Gene3D" id="1.10.1900.20">
    <property type="entry name" value="Ribosomal protein L20"/>
    <property type="match status" value="1"/>
</dbReference>
<dbReference type="HAMAP" id="MF_00382">
    <property type="entry name" value="Ribosomal_bL20"/>
    <property type="match status" value="1"/>
</dbReference>
<dbReference type="InterPro" id="IPR005813">
    <property type="entry name" value="Ribosomal_bL20"/>
</dbReference>
<dbReference type="InterPro" id="IPR049946">
    <property type="entry name" value="RIBOSOMAL_L20_CS"/>
</dbReference>
<dbReference type="InterPro" id="IPR035566">
    <property type="entry name" value="Ribosomal_protein_bL20_C"/>
</dbReference>
<dbReference type="NCBIfam" id="TIGR01032">
    <property type="entry name" value="rplT_bact"/>
    <property type="match status" value="1"/>
</dbReference>
<dbReference type="PANTHER" id="PTHR10986">
    <property type="entry name" value="39S RIBOSOMAL PROTEIN L20"/>
    <property type="match status" value="1"/>
</dbReference>
<dbReference type="Pfam" id="PF00453">
    <property type="entry name" value="Ribosomal_L20"/>
    <property type="match status" value="1"/>
</dbReference>
<dbReference type="PRINTS" id="PR00062">
    <property type="entry name" value="RIBOSOMALL20"/>
</dbReference>
<dbReference type="SUPFAM" id="SSF74731">
    <property type="entry name" value="Ribosomal protein L20"/>
    <property type="match status" value="1"/>
</dbReference>
<dbReference type="PROSITE" id="PS00937">
    <property type="entry name" value="RIBOSOMAL_L20"/>
    <property type="match status" value="1"/>
</dbReference>
<accession>B2G8A7</accession>
<feature type="chain" id="PRO_0000355470" description="Large ribosomal subunit protein bL20">
    <location>
        <begin position="1"/>
        <end position="117"/>
    </location>
</feature>
<gene>
    <name evidence="1" type="primary">rplT</name>
    <name type="ordered locus">LAR_1173</name>
</gene>